<organism>
    <name type="scientific">Porphyromonas gingivalis (strain ATCC BAA-308 / W83)</name>
    <dbReference type="NCBI Taxonomy" id="242619"/>
    <lineage>
        <taxon>Bacteria</taxon>
        <taxon>Pseudomonadati</taxon>
        <taxon>Bacteroidota</taxon>
        <taxon>Bacteroidia</taxon>
        <taxon>Bacteroidales</taxon>
        <taxon>Porphyromonadaceae</taxon>
        <taxon>Porphyromonas</taxon>
    </lineage>
</organism>
<keyword id="KW-0067">ATP-binding</keyword>
<keyword id="KW-0133">Cell shape</keyword>
<keyword id="KW-0961">Cell wall biogenesis/degradation</keyword>
<keyword id="KW-0963">Cytoplasm</keyword>
<keyword id="KW-0436">Ligase</keyword>
<keyword id="KW-0460">Magnesium</keyword>
<keyword id="KW-0464">Manganese</keyword>
<keyword id="KW-0479">Metal-binding</keyword>
<keyword id="KW-0547">Nucleotide-binding</keyword>
<keyword id="KW-0573">Peptidoglycan synthesis</keyword>
<keyword id="KW-1185">Reference proteome</keyword>
<evidence type="ECO:0000250" key="1"/>
<evidence type="ECO:0000255" key="2">
    <source>
        <dbReference type="HAMAP-Rule" id="MF_00047"/>
    </source>
</evidence>
<gene>
    <name evidence="2" type="primary">ddl</name>
    <name type="synonym">ddlA</name>
    <name type="ordered locus">PG_0729</name>
</gene>
<reference key="1">
    <citation type="journal article" date="2003" name="J. Bacteriol.">
        <title>Complete genome sequence of the oral pathogenic bacterium Porphyromonas gingivalis strain W83.</title>
        <authorList>
            <person name="Nelson K.E."/>
            <person name="Fleischmann R.D."/>
            <person name="DeBoy R.T."/>
            <person name="Paulsen I.T."/>
            <person name="Fouts D.E."/>
            <person name="Eisen J.A."/>
            <person name="Daugherty S.C."/>
            <person name="Dodson R.J."/>
            <person name="Durkin A.S."/>
            <person name="Gwinn M.L."/>
            <person name="Haft D.H."/>
            <person name="Kolonay J.F."/>
            <person name="Nelson W.C."/>
            <person name="Mason T.M."/>
            <person name="Tallon L."/>
            <person name="Gray J."/>
            <person name="Granger D."/>
            <person name="Tettelin H."/>
            <person name="Dong H."/>
            <person name="Galvin J.L."/>
            <person name="Duncan M.J."/>
            <person name="Dewhirst F.E."/>
            <person name="Fraser C.M."/>
        </authorList>
    </citation>
    <scope>NUCLEOTIDE SEQUENCE [LARGE SCALE GENOMIC DNA]</scope>
    <source>
        <strain>ATCC BAA-308 / W83</strain>
    </source>
</reference>
<feature type="chain" id="PRO_0000177851" description="D-alanine--D-alanine ligase">
    <location>
        <begin position="1"/>
        <end position="330"/>
    </location>
</feature>
<feature type="domain" description="ATP-grasp" evidence="2">
    <location>
        <begin position="122"/>
        <end position="323"/>
    </location>
</feature>
<feature type="binding site" evidence="2">
    <location>
        <begin position="151"/>
        <end position="206"/>
    </location>
    <ligand>
        <name>ATP</name>
        <dbReference type="ChEBI" id="CHEBI:30616"/>
    </ligand>
</feature>
<feature type="binding site" evidence="2">
    <location>
        <position position="277"/>
    </location>
    <ligand>
        <name>Mg(2+)</name>
        <dbReference type="ChEBI" id="CHEBI:18420"/>
        <label>1</label>
    </ligand>
</feature>
<feature type="binding site" evidence="2">
    <location>
        <position position="290"/>
    </location>
    <ligand>
        <name>Mg(2+)</name>
        <dbReference type="ChEBI" id="CHEBI:18420"/>
        <label>1</label>
    </ligand>
</feature>
<feature type="binding site" evidence="2">
    <location>
        <position position="290"/>
    </location>
    <ligand>
        <name>Mg(2+)</name>
        <dbReference type="ChEBI" id="CHEBI:18420"/>
        <label>2</label>
    </ligand>
</feature>
<feature type="binding site" evidence="2">
    <location>
        <position position="292"/>
    </location>
    <ligand>
        <name>Mg(2+)</name>
        <dbReference type="ChEBI" id="CHEBI:18420"/>
        <label>2</label>
    </ligand>
</feature>
<name>DDL_PORGI</name>
<dbReference type="EC" id="6.3.2.4" evidence="2"/>
<dbReference type="EMBL" id="AE015924">
    <property type="protein sequence ID" value="AAQ65899.1"/>
    <property type="molecule type" value="Genomic_DNA"/>
</dbReference>
<dbReference type="RefSeq" id="WP_005873618.1">
    <property type="nucleotide sequence ID" value="NC_002950.2"/>
</dbReference>
<dbReference type="SMR" id="Q7MWA2"/>
<dbReference type="STRING" id="242619.PG_0729"/>
<dbReference type="EnsemblBacteria" id="AAQ65899">
    <property type="protein sequence ID" value="AAQ65899"/>
    <property type="gene ID" value="PG_0729"/>
</dbReference>
<dbReference type="KEGG" id="pgi:PG_0729"/>
<dbReference type="PATRIC" id="fig|242619.8.peg.669"/>
<dbReference type="eggNOG" id="COG1181">
    <property type="taxonomic scope" value="Bacteria"/>
</dbReference>
<dbReference type="HOGENOM" id="CLU_039268_1_1_10"/>
<dbReference type="BioCyc" id="PGIN242619:G1G02-671-MONOMER"/>
<dbReference type="UniPathway" id="UPA00219"/>
<dbReference type="Proteomes" id="UP000000588">
    <property type="component" value="Chromosome"/>
</dbReference>
<dbReference type="GO" id="GO:0005737">
    <property type="term" value="C:cytoplasm"/>
    <property type="evidence" value="ECO:0007669"/>
    <property type="project" value="UniProtKB-SubCell"/>
</dbReference>
<dbReference type="GO" id="GO:0005524">
    <property type="term" value="F:ATP binding"/>
    <property type="evidence" value="ECO:0007669"/>
    <property type="project" value="UniProtKB-KW"/>
</dbReference>
<dbReference type="GO" id="GO:0008716">
    <property type="term" value="F:D-alanine-D-alanine ligase activity"/>
    <property type="evidence" value="ECO:0007669"/>
    <property type="project" value="UniProtKB-UniRule"/>
</dbReference>
<dbReference type="GO" id="GO:0046872">
    <property type="term" value="F:metal ion binding"/>
    <property type="evidence" value="ECO:0007669"/>
    <property type="project" value="UniProtKB-KW"/>
</dbReference>
<dbReference type="GO" id="GO:0071555">
    <property type="term" value="P:cell wall organization"/>
    <property type="evidence" value="ECO:0007669"/>
    <property type="project" value="UniProtKB-KW"/>
</dbReference>
<dbReference type="GO" id="GO:0009252">
    <property type="term" value="P:peptidoglycan biosynthetic process"/>
    <property type="evidence" value="ECO:0007669"/>
    <property type="project" value="UniProtKB-UniRule"/>
</dbReference>
<dbReference type="GO" id="GO:0008360">
    <property type="term" value="P:regulation of cell shape"/>
    <property type="evidence" value="ECO:0007669"/>
    <property type="project" value="UniProtKB-KW"/>
</dbReference>
<dbReference type="Gene3D" id="3.40.50.20">
    <property type="match status" value="1"/>
</dbReference>
<dbReference type="Gene3D" id="3.30.1490.20">
    <property type="entry name" value="ATP-grasp fold, A domain"/>
    <property type="match status" value="1"/>
</dbReference>
<dbReference type="Gene3D" id="3.30.470.20">
    <property type="entry name" value="ATP-grasp fold, B domain"/>
    <property type="match status" value="1"/>
</dbReference>
<dbReference type="HAMAP" id="MF_00047">
    <property type="entry name" value="Dala_Dala_lig"/>
    <property type="match status" value="1"/>
</dbReference>
<dbReference type="InterPro" id="IPR011761">
    <property type="entry name" value="ATP-grasp"/>
</dbReference>
<dbReference type="InterPro" id="IPR013815">
    <property type="entry name" value="ATP_grasp_subdomain_1"/>
</dbReference>
<dbReference type="InterPro" id="IPR000291">
    <property type="entry name" value="D-Ala_lig_Van_CS"/>
</dbReference>
<dbReference type="InterPro" id="IPR005905">
    <property type="entry name" value="D_ala_D_ala"/>
</dbReference>
<dbReference type="InterPro" id="IPR011095">
    <property type="entry name" value="Dala_Dala_lig_C"/>
</dbReference>
<dbReference type="InterPro" id="IPR011127">
    <property type="entry name" value="Dala_Dala_lig_N"/>
</dbReference>
<dbReference type="InterPro" id="IPR016185">
    <property type="entry name" value="PreATP-grasp_dom_sf"/>
</dbReference>
<dbReference type="NCBIfam" id="NF002527">
    <property type="entry name" value="PRK01966.1-3"/>
    <property type="match status" value="1"/>
</dbReference>
<dbReference type="PANTHER" id="PTHR23132">
    <property type="entry name" value="D-ALANINE--D-ALANINE LIGASE"/>
    <property type="match status" value="1"/>
</dbReference>
<dbReference type="PANTHER" id="PTHR23132:SF23">
    <property type="entry name" value="D-ALANINE--D-ALANINE LIGASE B"/>
    <property type="match status" value="1"/>
</dbReference>
<dbReference type="Pfam" id="PF07478">
    <property type="entry name" value="Dala_Dala_lig_C"/>
    <property type="match status" value="1"/>
</dbReference>
<dbReference type="Pfam" id="PF01820">
    <property type="entry name" value="Dala_Dala_lig_N"/>
    <property type="match status" value="1"/>
</dbReference>
<dbReference type="PIRSF" id="PIRSF039102">
    <property type="entry name" value="Ddl/VanB"/>
    <property type="match status" value="1"/>
</dbReference>
<dbReference type="SUPFAM" id="SSF56059">
    <property type="entry name" value="Glutathione synthetase ATP-binding domain-like"/>
    <property type="match status" value="1"/>
</dbReference>
<dbReference type="SUPFAM" id="SSF52440">
    <property type="entry name" value="PreATP-grasp domain"/>
    <property type="match status" value="1"/>
</dbReference>
<dbReference type="PROSITE" id="PS50975">
    <property type="entry name" value="ATP_GRASP"/>
    <property type="match status" value="1"/>
</dbReference>
<dbReference type="PROSITE" id="PS00843">
    <property type="entry name" value="DALA_DALA_LIGASE_1"/>
    <property type="match status" value="1"/>
</dbReference>
<dbReference type="PROSITE" id="PS00844">
    <property type="entry name" value="DALA_DALA_LIGASE_2"/>
    <property type="match status" value="1"/>
</dbReference>
<protein>
    <recommendedName>
        <fullName evidence="2">D-alanine--D-alanine ligase</fullName>
        <ecNumber evidence="2">6.3.2.4</ecNumber>
    </recommendedName>
    <alternativeName>
        <fullName evidence="2">D-Ala-D-Ala ligase</fullName>
    </alternativeName>
    <alternativeName>
        <fullName evidence="2">D-alanylalanine synthetase</fullName>
    </alternativeName>
</protein>
<proteinExistence type="inferred from homology"/>
<comment type="function">
    <text evidence="2">Cell wall formation.</text>
</comment>
<comment type="catalytic activity">
    <reaction evidence="2">
        <text>2 D-alanine + ATP = D-alanyl-D-alanine + ADP + phosphate + H(+)</text>
        <dbReference type="Rhea" id="RHEA:11224"/>
        <dbReference type="ChEBI" id="CHEBI:15378"/>
        <dbReference type="ChEBI" id="CHEBI:30616"/>
        <dbReference type="ChEBI" id="CHEBI:43474"/>
        <dbReference type="ChEBI" id="CHEBI:57416"/>
        <dbReference type="ChEBI" id="CHEBI:57822"/>
        <dbReference type="ChEBI" id="CHEBI:456216"/>
        <dbReference type="EC" id="6.3.2.4"/>
    </reaction>
</comment>
<comment type="cofactor">
    <cofactor evidence="1">
        <name>Mg(2+)</name>
        <dbReference type="ChEBI" id="CHEBI:18420"/>
    </cofactor>
    <cofactor evidence="1">
        <name>Mn(2+)</name>
        <dbReference type="ChEBI" id="CHEBI:29035"/>
    </cofactor>
    <text evidence="1">Binds 2 magnesium or manganese ions per subunit.</text>
</comment>
<comment type="pathway">
    <text evidence="2">Cell wall biogenesis; peptidoglycan biosynthesis.</text>
</comment>
<comment type="subcellular location">
    <subcellularLocation>
        <location evidence="2">Cytoplasm</location>
    </subcellularLocation>
</comment>
<comment type="similarity">
    <text evidence="2">Belongs to the D-alanine--D-alanine ligase family.</text>
</comment>
<sequence length="330" mass="36353">MKKPIVAVIAGGYSGEHSVSLKSAAGILSWLGSEPFSTFLVLIERDRWSVRVSEQREVPLDKNDFSFDLDGERIRFDYAYITIHGTPGENGLLQGYLDMIGIPYNTGDTLVESLTFNKYVCNRFLSGFGIRIADSMRLTGRDTQPDVADLIARMGLPLFVKPNVGGSSIATTKVVEAAQLLPAIEQAFSEGEEVMIERLICGTEVTCGAFLRKKEVVALPVTEVVAHNEFFDFDAKYNGAVEEITPARISDEATRLIQTMTARIYELLNARGIIRVDYIIEADGIPTLLEVNTTPGMTPTSFIPQQVRAAGMDMKEVLCTIIRDGLNETQ</sequence>
<accession>Q7MWA2</accession>